<sequence>MFRGATQINLDSKGRLTVPTRYRAMLNEESQGQMVCTIDLHQPCLLLYTLSEWEIIEEKLSRLSSMNPAERRVQRLLLGHASECQMDSAGRLLLANTLRQHAGLVKEVMLVGQFNKFELWDEQAWYQQVKDDIAAEQSTQEPLSVRLQELSL</sequence>
<comment type="function">
    <text evidence="1">Negatively regulates its own expression and that of the subsequent genes in the proximal part of the division and cell wall (dcw) gene cluster. Acts by binding directly to DNA. May also regulate the expression of genes outside the dcw cluster.</text>
</comment>
<comment type="subunit">
    <text evidence="1">Forms oligomers.</text>
</comment>
<comment type="subcellular location">
    <subcellularLocation>
        <location evidence="1">Cytoplasm</location>
        <location evidence="1">Nucleoid</location>
    </subcellularLocation>
</comment>
<comment type="similarity">
    <text evidence="1">Belongs to the MraZ family.</text>
</comment>
<organism>
    <name type="scientific">Photorhabdus laumondii subsp. laumondii (strain DSM 15139 / CIP 105565 / TT01)</name>
    <name type="common">Photorhabdus luminescens subsp. laumondii</name>
    <dbReference type="NCBI Taxonomy" id="243265"/>
    <lineage>
        <taxon>Bacteria</taxon>
        <taxon>Pseudomonadati</taxon>
        <taxon>Pseudomonadota</taxon>
        <taxon>Gammaproteobacteria</taxon>
        <taxon>Enterobacterales</taxon>
        <taxon>Morganellaceae</taxon>
        <taxon>Photorhabdus</taxon>
    </lineage>
</organism>
<proteinExistence type="inferred from homology"/>
<accession>Q7N138</accession>
<reference key="1">
    <citation type="journal article" date="2003" name="Nat. Biotechnol.">
        <title>The genome sequence of the entomopathogenic bacterium Photorhabdus luminescens.</title>
        <authorList>
            <person name="Duchaud E."/>
            <person name="Rusniok C."/>
            <person name="Frangeul L."/>
            <person name="Buchrieser C."/>
            <person name="Givaudan A."/>
            <person name="Taourit S."/>
            <person name="Bocs S."/>
            <person name="Boursaux-Eude C."/>
            <person name="Chandler M."/>
            <person name="Charles J.-F."/>
            <person name="Dassa E."/>
            <person name="Derose R."/>
            <person name="Derzelle S."/>
            <person name="Freyssinet G."/>
            <person name="Gaudriault S."/>
            <person name="Medigue C."/>
            <person name="Lanois A."/>
            <person name="Powell K."/>
            <person name="Siguier P."/>
            <person name="Vincent R."/>
            <person name="Wingate V."/>
            <person name="Zouine M."/>
            <person name="Glaser P."/>
            <person name="Boemare N."/>
            <person name="Danchin A."/>
            <person name="Kunst F."/>
        </authorList>
    </citation>
    <scope>NUCLEOTIDE SEQUENCE [LARGE SCALE GENOMIC DNA]</scope>
    <source>
        <strain>DSM 15139 / CIP 105565 / TT01</strain>
    </source>
</reference>
<name>MRAZ_PHOLL</name>
<feature type="chain" id="PRO_0000108519" description="Transcriptional regulator MraZ">
    <location>
        <begin position="1"/>
        <end position="152"/>
    </location>
</feature>
<feature type="domain" description="SpoVT-AbrB 1" evidence="2">
    <location>
        <begin position="5"/>
        <end position="52"/>
    </location>
</feature>
<feature type="domain" description="SpoVT-AbrB 2" evidence="2">
    <location>
        <begin position="81"/>
        <end position="124"/>
    </location>
</feature>
<dbReference type="EMBL" id="BX571871">
    <property type="protein sequence ID" value="CAE16036.1"/>
    <property type="molecule type" value="Genomic_DNA"/>
</dbReference>
<dbReference type="RefSeq" id="WP_011147826.1">
    <property type="nucleotide sequence ID" value="NC_005126.1"/>
</dbReference>
<dbReference type="SMR" id="Q7N138"/>
<dbReference type="STRING" id="243265.plu3663"/>
<dbReference type="GeneID" id="88806424"/>
<dbReference type="KEGG" id="plu:plu3663"/>
<dbReference type="eggNOG" id="COG2001">
    <property type="taxonomic scope" value="Bacteria"/>
</dbReference>
<dbReference type="HOGENOM" id="CLU_107907_2_0_6"/>
<dbReference type="OrthoDB" id="9807753at2"/>
<dbReference type="Proteomes" id="UP000002514">
    <property type="component" value="Chromosome"/>
</dbReference>
<dbReference type="GO" id="GO:0005737">
    <property type="term" value="C:cytoplasm"/>
    <property type="evidence" value="ECO:0007669"/>
    <property type="project" value="UniProtKB-UniRule"/>
</dbReference>
<dbReference type="GO" id="GO:0009295">
    <property type="term" value="C:nucleoid"/>
    <property type="evidence" value="ECO:0007669"/>
    <property type="project" value="UniProtKB-SubCell"/>
</dbReference>
<dbReference type="GO" id="GO:0003700">
    <property type="term" value="F:DNA-binding transcription factor activity"/>
    <property type="evidence" value="ECO:0007669"/>
    <property type="project" value="UniProtKB-UniRule"/>
</dbReference>
<dbReference type="GO" id="GO:0000976">
    <property type="term" value="F:transcription cis-regulatory region binding"/>
    <property type="evidence" value="ECO:0007669"/>
    <property type="project" value="TreeGrafter"/>
</dbReference>
<dbReference type="GO" id="GO:2000143">
    <property type="term" value="P:negative regulation of DNA-templated transcription initiation"/>
    <property type="evidence" value="ECO:0007669"/>
    <property type="project" value="TreeGrafter"/>
</dbReference>
<dbReference type="CDD" id="cd16321">
    <property type="entry name" value="MraZ_C"/>
    <property type="match status" value="1"/>
</dbReference>
<dbReference type="CDD" id="cd16320">
    <property type="entry name" value="MraZ_N"/>
    <property type="match status" value="1"/>
</dbReference>
<dbReference type="FunFam" id="3.40.1550.20:FF:000001">
    <property type="entry name" value="Transcriptional regulator MraZ"/>
    <property type="match status" value="1"/>
</dbReference>
<dbReference type="Gene3D" id="3.40.1550.20">
    <property type="entry name" value="Transcriptional regulator MraZ domain"/>
    <property type="match status" value="1"/>
</dbReference>
<dbReference type="HAMAP" id="MF_01008">
    <property type="entry name" value="MraZ"/>
    <property type="match status" value="1"/>
</dbReference>
<dbReference type="InterPro" id="IPR003444">
    <property type="entry name" value="MraZ"/>
</dbReference>
<dbReference type="InterPro" id="IPR035644">
    <property type="entry name" value="MraZ_C"/>
</dbReference>
<dbReference type="InterPro" id="IPR020603">
    <property type="entry name" value="MraZ_dom"/>
</dbReference>
<dbReference type="InterPro" id="IPR035642">
    <property type="entry name" value="MraZ_N"/>
</dbReference>
<dbReference type="InterPro" id="IPR038619">
    <property type="entry name" value="MraZ_sf"/>
</dbReference>
<dbReference type="InterPro" id="IPR007159">
    <property type="entry name" value="SpoVT-AbrB_dom"/>
</dbReference>
<dbReference type="InterPro" id="IPR037914">
    <property type="entry name" value="SpoVT-AbrB_sf"/>
</dbReference>
<dbReference type="NCBIfam" id="TIGR00242">
    <property type="entry name" value="division/cell wall cluster transcriptional repressor MraZ"/>
    <property type="match status" value="1"/>
</dbReference>
<dbReference type="PANTHER" id="PTHR34701">
    <property type="entry name" value="TRANSCRIPTIONAL REGULATOR MRAZ"/>
    <property type="match status" value="1"/>
</dbReference>
<dbReference type="PANTHER" id="PTHR34701:SF1">
    <property type="entry name" value="TRANSCRIPTIONAL REGULATOR MRAZ"/>
    <property type="match status" value="1"/>
</dbReference>
<dbReference type="Pfam" id="PF02381">
    <property type="entry name" value="MraZ"/>
    <property type="match status" value="2"/>
</dbReference>
<dbReference type="SUPFAM" id="SSF89447">
    <property type="entry name" value="AbrB/MazE/MraZ-like"/>
    <property type="match status" value="1"/>
</dbReference>
<dbReference type="PROSITE" id="PS51740">
    <property type="entry name" value="SPOVT_ABRB"/>
    <property type="match status" value="2"/>
</dbReference>
<evidence type="ECO:0000255" key="1">
    <source>
        <dbReference type="HAMAP-Rule" id="MF_01008"/>
    </source>
</evidence>
<evidence type="ECO:0000255" key="2">
    <source>
        <dbReference type="PROSITE-ProRule" id="PRU01076"/>
    </source>
</evidence>
<gene>
    <name evidence="1" type="primary">mraZ</name>
    <name type="ordered locus">plu3663</name>
</gene>
<keyword id="KW-0963">Cytoplasm</keyword>
<keyword id="KW-0238">DNA-binding</keyword>
<keyword id="KW-1185">Reference proteome</keyword>
<keyword id="KW-0677">Repeat</keyword>
<keyword id="KW-0678">Repressor</keyword>
<keyword id="KW-0804">Transcription</keyword>
<keyword id="KW-0805">Transcription regulation</keyword>
<protein>
    <recommendedName>
        <fullName>Transcriptional regulator MraZ</fullName>
    </recommendedName>
</protein>